<sequence length="35" mass="3880">MSDINATRLPIIIVLGLIIPLCVSDIEMILTRGER</sequence>
<name>MSD1_AMARI</name>
<proteinExistence type="inferred from homology"/>
<keyword id="KW-0800">Toxin</keyword>
<accession>A0A023IWM6</accession>
<dbReference type="EMBL" id="KF552087">
    <property type="protein sequence ID" value="AHB18715.1"/>
    <property type="molecule type" value="Genomic_DNA"/>
</dbReference>
<dbReference type="GO" id="GO:0090729">
    <property type="term" value="F:toxin activity"/>
    <property type="evidence" value="ECO:0007669"/>
    <property type="project" value="UniProtKB-KW"/>
</dbReference>
<dbReference type="InterPro" id="IPR027582">
    <property type="entry name" value="Amanitin/phalloidin"/>
</dbReference>
<dbReference type="NCBIfam" id="TIGR04309">
    <property type="entry name" value="amanitin"/>
    <property type="match status" value="1"/>
</dbReference>
<comment type="function">
    <text evidence="4">Probable toxin that belongs to the MSDIN-like toxin family responsible for a large number of food poisoning cases and deaths (PubMed:24613547).</text>
</comment>
<comment type="PTM">
    <text evidence="1">Processed by the macrocyclase-peptidase enzyme POPB to yield a toxic cyclic decapeptide (By similarity). POPB first removes 10 residues from the N-terminus (By similarity). Conformational trapping of the remaining peptide forces the enzyme to release this intermediate rather than proceed to macrocyclization (By similarity). The enzyme rebinds the remaining peptide in a different conformation and catalyzes macrocyclization of the N-terminal 10 residues (By similarity).</text>
</comment>
<comment type="similarity">
    <text evidence="3">Belongs to the MSDIN fungal toxin family.</text>
</comment>
<reference key="1">
    <citation type="journal article" date="2014" name="Toxicon">
        <title>The molecular diversity of toxin gene families in lethal Amanita mushrooms.</title>
        <authorList>
            <person name="Li P."/>
            <person name="Deng W."/>
            <person name="Li T."/>
        </authorList>
    </citation>
    <scope>NUCLEOTIDE SEQUENCE [GENOMIC DNA]</scope>
    <scope>FUNCTION</scope>
</reference>
<protein>
    <recommendedName>
        <fullName evidence="2">MSDIN-like toxin proprotein 1</fullName>
    </recommendedName>
    <component>
        <recommendedName>
            <fullName evidence="4">Toxin MSD1</fullName>
        </recommendedName>
    </component>
</protein>
<evidence type="ECO:0000250" key="1">
    <source>
        <dbReference type="UniProtKB" id="A0A067SLB9"/>
    </source>
</evidence>
<evidence type="ECO:0000303" key="2">
    <source>
    </source>
</evidence>
<evidence type="ECO:0000305" key="3"/>
<evidence type="ECO:0000305" key="4">
    <source>
    </source>
</evidence>
<feature type="propeptide" id="PRO_0000443707" evidence="4">
    <location>
        <begin position="1"/>
        <end position="10"/>
    </location>
</feature>
<feature type="peptide" id="PRO_0000443708" description="Toxin MSD1" evidence="4">
    <location>
        <begin position="11"/>
        <end position="20"/>
    </location>
</feature>
<feature type="propeptide" id="PRO_0000443709" evidence="4">
    <location>
        <begin position="21"/>
        <end position="35"/>
    </location>
</feature>
<feature type="cross-link" description="Cyclopeptide (Ile-Pro)" evidence="4">
    <location>
        <begin position="11"/>
        <end position="20"/>
    </location>
</feature>
<organism>
    <name type="scientific">Amanita rimosa</name>
    <dbReference type="NCBI Taxonomy" id="580330"/>
    <lineage>
        <taxon>Eukaryota</taxon>
        <taxon>Fungi</taxon>
        <taxon>Dikarya</taxon>
        <taxon>Basidiomycota</taxon>
        <taxon>Agaricomycotina</taxon>
        <taxon>Agaricomycetes</taxon>
        <taxon>Agaricomycetidae</taxon>
        <taxon>Agaricales</taxon>
        <taxon>Pluteineae</taxon>
        <taxon>Amanitaceae</taxon>
        <taxon>Amanita</taxon>
    </lineage>
</organism>